<dbReference type="EC" id="3.6.1.9" evidence="1"/>
<dbReference type="EMBL" id="CP000685">
    <property type="protein sequence ID" value="ABQ05976.1"/>
    <property type="molecule type" value="Genomic_DNA"/>
</dbReference>
<dbReference type="RefSeq" id="WP_012025014.1">
    <property type="nucleotide sequence ID" value="NC_009441.1"/>
</dbReference>
<dbReference type="SMR" id="A5FFP4"/>
<dbReference type="STRING" id="376686.Fjoh_2955"/>
<dbReference type="KEGG" id="fjo:Fjoh_2955"/>
<dbReference type="eggNOG" id="COG0424">
    <property type="taxonomic scope" value="Bacteria"/>
</dbReference>
<dbReference type="HOGENOM" id="CLU_040416_0_0_10"/>
<dbReference type="OrthoDB" id="9807767at2"/>
<dbReference type="Proteomes" id="UP000006694">
    <property type="component" value="Chromosome"/>
</dbReference>
<dbReference type="GO" id="GO:0005737">
    <property type="term" value="C:cytoplasm"/>
    <property type="evidence" value="ECO:0007669"/>
    <property type="project" value="UniProtKB-SubCell"/>
</dbReference>
<dbReference type="GO" id="GO:0036218">
    <property type="term" value="F:dTTP diphosphatase activity"/>
    <property type="evidence" value="ECO:0007669"/>
    <property type="project" value="RHEA"/>
</dbReference>
<dbReference type="GO" id="GO:0036221">
    <property type="term" value="F:UTP diphosphatase activity"/>
    <property type="evidence" value="ECO:0007669"/>
    <property type="project" value="RHEA"/>
</dbReference>
<dbReference type="GO" id="GO:0009117">
    <property type="term" value="P:nucleotide metabolic process"/>
    <property type="evidence" value="ECO:0007669"/>
    <property type="project" value="UniProtKB-KW"/>
</dbReference>
<dbReference type="CDD" id="cd00555">
    <property type="entry name" value="Maf"/>
    <property type="match status" value="1"/>
</dbReference>
<dbReference type="Gene3D" id="3.90.950.10">
    <property type="match status" value="1"/>
</dbReference>
<dbReference type="HAMAP" id="MF_00528">
    <property type="entry name" value="Maf"/>
    <property type="match status" value="1"/>
</dbReference>
<dbReference type="InterPro" id="IPR029001">
    <property type="entry name" value="ITPase-like_fam"/>
</dbReference>
<dbReference type="InterPro" id="IPR003697">
    <property type="entry name" value="Maf-like"/>
</dbReference>
<dbReference type="NCBIfam" id="TIGR00172">
    <property type="entry name" value="maf"/>
    <property type="match status" value="1"/>
</dbReference>
<dbReference type="PANTHER" id="PTHR43213">
    <property type="entry name" value="BIFUNCTIONAL DTTP/UTP PYROPHOSPHATASE/METHYLTRANSFERASE PROTEIN-RELATED"/>
    <property type="match status" value="1"/>
</dbReference>
<dbReference type="PANTHER" id="PTHR43213:SF5">
    <property type="entry name" value="BIFUNCTIONAL DTTP_UTP PYROPHOSPHATASE_METHYLTRANSFERASE PROTEIN-RELATED"/>
    <property type="match status" value="1"/>
</dbReference>
<dbReference type="Pfam" id="PF02545">
    <property type="entry name" value="Maf"/>
    <property type="match status" value="1"/>
</dbReference>
<dbReference type="PIRSF" id="PIRSF006305">
    <property type="entry name" value="Maf"/>
    <property type="match status" value="1"/>
</dbReference>
<dbReference type="SUPFAM" id="SSF52972">
    <property type="entry name" value="ITPase-like"/>
    <property type="match status" value="1"/>
</dbReference>
<feature type="chain" id="PRO_1000081717" description="dTTP/UTP pyrophosphatase">
    <location>
        <begin position="1"/>
        <end position="194"/>
    </location>
</feature>
<feature type="active site" description="Proton acceptor" evidence="1">
    <location>
        <position position="77"/>
    </location>
</feature>
<feature type="site" description="Important for substrate specificity" evidence="1">
    <location>
        <position position="19"/>
    </location>
</feature>
<feature type="site" description="Important for substrate specificity" evidence="1">
    <location>
        <position position="78"/>
    </location>
</feature>
<feature type="site" description="Important for substrate specificity" evidence="1">
    <location>
        <position position="160"/>
    </location>
</feature>
<accession>A5FFP4</accession>
<name>NTPPA_FLAJ1</name>
<protein>
    <recommendedName>
        <fullName evidence="1">dTTP/UTP pyrophosphatase</fullName>
        <shortName evidence="1">dTTPase/UTPase</shortName>
        <ecNumber evidence="1">3.6.1.9</ecNumber>
    </recommendedName>
    <alternativeName>
        <fullName evidence="1">Nucleoside triphosphate pyrophosphatase</fullName>
    </alternativeName>
    <alternativeName>
        <fullName evidence="1">Nucleotide pyrophosphatase</fullName>
        <shortName evidence="1">Nucleotide PPase</shortName>
    </alternativeName>
</protein>
<organism>
    <name type="scientific">Flavobacterium johnsoniae (strain ATCC 17061 / DSM 2064 / JCM 8514 / BCRC 14874 / CCUG 350202 / NBRC 14942 / NCIMB 11054 / UW101)</name>
    <name type="common">Cytophaga johnsonae</name>
    <dbReference type="NCBI Taxonomy" id="376686"/>
    <lineage>
        <taxon>Bacteria</taxon>
        <taxon>Pseudomonadati</taxon>
        <taxon>Bacteroidota</taxon>
        <taxon>Flavobacteriia</taxon>
        <taxon>Flavobacteriales</taxon>
        <taxon>Flavobacteriaceae</taxon>
        <taxon>Flavobacterium</taxon>
    </lineage>
</organism>
<sequence length="194" mass="22276">MLKEKLKKYKIILASGSPRRQQFFKDLDLDFEIRLKDVEEIYPPELKAVEITNFLAELKANAFEGELKENEILVTSDTIVWHQNKALGKPKNAEDAFQMIKSMSNTTHEVITSVCFKTNTAFTLLHDVTKVTFKDLSDESILYYIENYKPYDKAGAYGIQEWFGFMAVTKVEGSYTNVMGLPTAKVYEYLTTLV</sequence>
<gene>
    <name type="ordered locus">Fjoh_2955</name>
</gene>
<proteinExistence type="inferred from homology"/>
<reference key="1">
    <citation type="journal article" date="2009" name="Appl. Environ. Microbiol.">
        <title>Novel features of the polysaccharide-digesting gliding bacterium Flavobacterium johnsoniae as revealed by genome sequence analysis.</title>
        <authorList>
            <person name="McBride M.J."/>
            <person name="Xie G."/>
            <person name="Martens E.C."/>
            <person name="Lapidus A."/>
            <person name="Henrissat B."/>
            <person name="Rhodes R.G."/>
            <person name="Goltsman E."/>
            <person name="Wang W."/>
            <person name="Xu J."/>
            <person name="Hunnicutt D.W."/>
            <person name="Staroscik A.M."/>
            <person name="Hoover T.R."/>
            <person name="Cheng Y.Q."/>
            <person name="Stein J.L."/>
        </authorList>
    </citation>
    <scope>NUCLEOTIDE SEQUENCE [LARGE SCALE GENOMIC DNA]</scope>
    <source>
        <strain>ATCC 17061 / DSM 2064 / JCM 8514 / BCRC 14874 / CCUG 350202 / NBRC 14942 / NCIMB 11054 / UW101</strain>
    </source>
</reference>
<comment type="function">
    <text evidence="1">Nucleoside triphosphate pyrophosphatase that hydrolyzes dTTP and UTP. May have a dual role in cell division arrest and in preventing the incorporation of modified nucleotides into cellular nucleic acids.</text>
</comment>
<comment type="catalytic activity">
    <reaction evidence="1">
        <text>dTTP + H2O = dTMP + diphosphate + H(+)</text>
        <dbReference type="Rhea" id="RHEA:28534"/>
        <dbReference type="ChEBI" id="CHEBI:15377"/>
        <dbReference type="ChEBI" id="CHEBI:15378"/>
        <dbReference type="ChEBI" id="CHEBI:33019"/>
        <dbReference type="ChEBI" id="CHEBI:37568"/>
        <dbReference type="ChEBI" id="CHEBI:63528"/>
        <dbReference type="EC" id="3.6.1.9"/>
    </reaction>
</comment>
<comment type="catalytic activity">
    <reaction evidence="1">
        <text>UTP + H2O = UMP + diphosphate + H(+)</text>
        <dbReference type="Rhea" id="RHEA:29395"/>
        <dbReference type="ChEBI" id="CHEBI:15377"/>
        <dbReference type="ChEBI" id="CHEBI:15378"/>
        <dbReference type="ChEBI" id="CHEBI:33019"/>
        <dbReference type="ChEBI" id="CHEBI:46398"/>
        <dbReference type="ChEBI" id="CHEBI:57865"/>
        <dbReference type="EC" id="3.6.1.9"/>
    </reaction>
</comment>
<comment type="cofactor">
    <cofactor evidence="1">
        <name>a divalent metal cation</name>
        <dbReference type="ChEBI" id="CHEBI:60240"/>
    </cofactor>
</comment>
<comment type="subcellular location">
    <subcellularLocation>
        <location evidence="1">Cytoplasm</location>
    </subcellularLocation>
</comment>
<comment type="similarity">
    <text evidence="1">Belongs to the Maf family. YhdE subfamily.</text>
</comment>
<keyword id="KW-0963">Cytoplasm</keyword>
<keyword id="KW-0378">Hydrolase</keyword>
<keyword id="KW-0546">Nucleotide metabolism</keyword>
<evidence type="ECO:0000255" key="1">
    <source>
        <dbReference type="HAMAP-Rule" id="MF_00528"/>
    </source>
</evidence>